<accession>Q9K6D6</accession>
<keyword id="KW-0240">DNA-directed RNA polymerase</keyword>
<keyword id="KW-0548">Nucleotidyltransferase</keyword>
<keyword id="KW-1185">Reference proteome</keyword>
<keyword id="KW-0804">Transcription</keyword>
<keyword id="KW-0808">Transferase</keyword>
<dbReference type="EMBL" id="BA000004">
    <property type="protein sequence ID" value="BAB07512.1"/>
    <property type="molecule type" value="Genomic_DNA"/>
</dbReference>
<dbReference type="PIR" id="A84124">
    <property type="entry name" value="A84124"/>
</dbReference>
<dbReference type="RefSeq" id="WP_010899918.1">
    <property type="nucleotide sequence ID" value="NC_002570.2"/>
</dbReference>
<dbReference type="SMR" id="Q9K6D6"/>
<dbReference type="STRING" id="272558.gene:10729706"/>
<dbReference type="KEGG" id="bha:BH3793"/>
<dbReference type="eggNOG" id="COG3343">
    <property type="taxonomic scope" value="Bacteria"/>
</dbReference>
<dbReference type="HOGENOM" id="CLU_116648_1_0_9"/>
<dbReference type="OrthoDB" id="401223at2"/>
<dbReference type="Proteomes" id="UP000001258">
    <property type="component" value="Chromosome"/>
</dbReference>
<dbReference type="GO" id="GO:0000428">
    <property type="term" value="C:DNA-directed RNA polymerase complex"/>
    <property type="evidence" value="ECO:0007669"/>
    <property type="project" value="UniProtKB-KW"/>
</dbReference>
<dbReference type="GO" id="GO:0003899">
    <property type="term" value="F:DNA-directed RNA polymerase activity"/>
    <property type="evidence" value="ECO:0007669"/>
    <property type="project" value="UniProtKB-UniRule"/>
</dbReference>
<dbReference type="GO" id="GO:0006351">
    <property type="term" value="P:DNA-templated transcription"/>
    <property type="evidence" value="ECO:0007669"/>
    <property type="project" value="InterPro"/>
</dbReference>
<dbReference type="GO" id="GO:0006355">
    <property type="term" value="P:regulation of DNA-templated transcription"/>
    <property type="evidence" value="ECO:0007669"/>
    <property type="project" value="UniProtKB-UniRule"/>
</dbReference>
<dbReference type="Gene3D" id="1.10.10.1250">
    <property type="entry name" value="RNA polymerase, subunit delta, N-terminal domain"/>
    <property type="match status" value="1"/>
</dbReference>
<dbReference type="HAMAP" id="MF_00357">
    <property type="entry name" value="RNApol_bact_RpoE"/>
    <property type="match status" value="1"/>
</dbReference>
<dbReference type="InterPro" id="IPR007759">
    <property type="entry name" value="Asxl_HARE-HTH"/>
</dbReference>
<dbReference type="InterPro" id="IPR038087">
    <property type="entry name" value="RNAP_delta_N_dom_sf"/>
</dbReference>
<dbReference type="InterPro" id="IPR029757">
    <property type="entry name" value="RpoE"/>
</dbReference>
<dbReference type="NCBIfam" id="TIGR04567">
    <property type="entry name" value="RNAP_delt_lowGC"/>
    <property type="match status" value="1"/>
</dbReference>
<dbReference type="Pfam" id="PF05066">
    <property type="entry name" value="HARE-HTH"/>
    <property type="match status" value="1"/>
</dbReference>
<dbReference type="PROSITE" id="PS51913">
    <property type="entry name" value="HTH_HARE"/>
    <property type="match status" value="1"/>
</dbReference>
<evidence type="ECO:0000250" key="1"/>
<evidence type="ECO:0000255" key="2">
    <source>
        <dbReference type="PROSITE-ProRule" id="PRU01261"/>
    </source>
</evidence>
<evidence type="ECO:0000256" key="3">
    <source>
        <dbReference type="SAM" id="MobiDB-lite"/>
    </source>
</evidence>
<evidence type="ECO:0000305" key="4"/>
<sequence length="164" mass="19213">MKLAELSKEEIQELSMVEVAYLVMKETKEPFNYQDLLKKVAELKGMSEEQMLDRIGYLYTDLNIDGRFVTLGDNRWGLRSWYPLEQVEEEITGPTKKKAKAKAEEEVDELDENIEVFDDEFEDLEDELDELAESEDSDEEDEEFDEGDDIDELDDEFEESDDDL</sequence>
<comment type="function">
    <text evidence="1">Participates in both the initiation and recycling phases of transcription. In the presence of the delta subunit, RNAP displays an increased specificity of transcription, a decreased affinity for nucleic acids, and an increased efficiency of RNA synthesis because of enhanced recycling (By similarity).</text>
</comment>
<comment type="subunit">
    <text evidence="1">RNAP is composed of a core of 2 alpha, a beta and a beta' subunits. The core is associated with a delta subunit and one of several sigma factors (By similarity).</text>
</comment>
<comment type="similarity">
    <text evidence="4">Belongs to the RpoE family.</text>
</comment>
<protein>
    <recommendedName>
        <fullName>Probable DNA-directed RNA polymerase subunit delta</fullName>
    </recommendedName>
    <alternativeName>
        <fullName>RNAP delta factor</fullName>
    </alternativeName>
</protein>
<reference key="1">
    <citation type="journal article" date="2000" name="Nucleic Acids Res.">
        <title>Complete genome sequence of the alkaliphilic bacterium Bacillus halodurans and genomic sequence comparison with Bacillus subtilis.</title>
        <authorList>
            <person name="Takami H."/>
            <person name="Nakasone K."/>
            <person name="Takaki Y."/>
            <person name="Maeno G."/>
            <person name="Sasaki R."/>
            <person name="Masui N."/>
            <person name="Fuji F."/>
            <person name="Hirama C."/>
            <person name="Nakamura Y."/>
            <person name="Ogasawara N."/>
            <person name="Kuhara S."/>
            <person name="Horikoshi K."/>
        </authorList>
    </citation>
    <scope>NUCLEOTIDE SEQUENCE [LARGE SCALE GENOMIC DNA]</scope>
    <source>
        <strain>ATCC BAA-125 / DSM 18197 / FERM 7344 / JCM 9153 / C-125</strain>
    </source>
</reference>
<proteinExistence type="inferred from homology"/>
<name>RPOE_HALH5</name>
<organism>
    <name type="scientific">Halalkalibacterium halodurans (strain ATCC BAA-125 / DSM 18197 / FERM 7344 / JCM 9153 / C-125)</name>
    <name type="common">Bacillus halodurans</name>
    <dbReference type="NCBI Taxonomy" id="272558"/>
    <lineage>
        <taxon>Bacteria</taxon>
        <taxon>Bacillati</taxon>
        <taxon>Bacillota</taxon>
        <taxon>Bacilli</taxon>
        <taxon>Bacillales</taxon>
        <taxon>Bacillaceae</taxon>
        <taxon>Halalkalibacterium (ex Joshi et al. 2022)</taxon>
    </lineage>
</organism>
<gene>
    <name type="primary">rpoE</name>
    <name type="ordered locus">BH3793</name>
</gene>
<feature type="chain" id="PRO_0000204311" description="Probable DNA-directed RNA polymerase subunit delta">
    <location>
        <begin position="1"/>
        <end position="164"/>
    </location>
</feature>
<feature type="domain" description="HTH HARE-type" evidence="2">
    <location>
        <begin position="14"/>
        <end position="81"/>
    </location>
</feature>
<feature type="region of interest" description="Disordered" evidence="3">
    <location>
        <begin position="93"/>
        <end position="164"/>
    </location>
</feature>
<feature type="compositionally biased region" description="Acidic residues" evidence="3">
    <location>
        <begin position="105"/>
        <end position="164"/>
    </location>
</feature>